<dbReference type="EMBL" id="AE006914">
    <property type="protein sequence ID" value="AAL02578.1"/>
    <property type="molecule type" value="Genomic_DNA"/>
</dbReference>
<dbReference type="PIR" id="H97704">
    <property type="entry name" value="H97704"/>
</dbReference>
<dbReference type="RefSeq" id="WP_010976727.1">
    <property type="nucleotide sequence ID" value="NC_003103.1"/>
</dbReference>
<dbReference type="SMR" id="Q92JM7"/>
<dbReference type="GeneID" id="928625"/>
<dbReference type="KEGG" id="rco:RC0040"/>
<dbReference type="PATRIC" id="fig|272944.4.peg.48"/>
<dbReference type="HOGENOM" id="CLU_1925993_0_0_5"/>
<dbReference type="Proteomes" id="UP000000816">
    <property type="component" value="Chromosome"/>
</dbReference>
<dbReference type="Gene3D" id="1.25.40.10">
    <property type="entry name" value="Tetratricopeptide repeat domain"/>
    <property type="match status" value="1"/>
</dbReference>
<dbReference type="InterPro" id="IPR011990">
    <property type="entry name" value="TPR-like_helical_dom_sf"/>
</dbReference>
<dbReference type="SUPFAM" id="SSF81901">
    <property type="entry name" value="HCP-like"/>
    <property type="match status" value="1"/>
</dbReference>
<organism>
    <name type="scientific">Rickettsia conorii (strain ATCC VR-613 / Malish 7)</name>
    <dbReference type="NCBI Taxonomy" id="272944"/>
    <lineage>
        <taxon>Bacteria</taxon>
        <taxon>Pseudomonadati</taxon>
        <taxon>Pseudomonadota</taxon>
        <taxon>Alphaproteobacteria</taxon>
        <taxon>Rickettsiales</taxon>
        <taxon>Rickettsiaceae</taxon>
        <taxon>Rickettsieae</taxon>
        <taxon>Rickettsia</taxon>
        <taxon>spotted fever group</taxon>
    </lineage>
</organism>
<gene>
    <name type="ordered locus">RC0040</name>
</gene>
<feature type="chain" id="PRO_0000101435" description="Uncharacterized protein RC0040">
    <location>
        <begin position="1"/>
        <end position="105"/>
    </location>
</feature>
<sequence length="105" mass="11992">MLPDQALPIYNLLEKLLKETHKSINDCYKNENLYKHQLAKIYCQQAQICTPNGSTKLSKNSIGLYENAANLGSEEANIKLGKIEFKSGNYVKALEYFKNLCKRSF</sequence>
<name>Y040_RICCN</name>
<proteinExistence type="predicted"/>
<protein>
    <recommendedName>
        <fullName>Uncharacterized protein RC0040</fullName>
    </recommendedName>
</protein>
<reference key="1">
    <citation type="journal article" date="2001" name="Science">
        <title>Mechanisms of evolution in Rickettsia conorii and R. prowazekii.</title>
        <authorList>
            <person name="Ogata H."/>
            <person name="Audic S."/>
            <person name="Renesto-Audiffren P."/>
            <person name="Fournier P.-E."/>
            <person name="Barbe V."/>
            <person name="Samson D."/>
            <person name="Roux V."/>
            <person name="Cossart P."/>
            <person name="Weissenbach J."/>
            <person name="Claverie J.-M."/>
            <person name="Raoult D."/>
        </authorList>
    </citation>
    <scope>NUCLEOTIDE SEQUENCE [LARGE SCALE GENOMIC DNA]</scope>
    <source>
        <strain>ATCC VR-613 / Malish 7</strain>
    </source>
</reference>
<accession>Q92JM7</accession>